<proteinExistence type="inferred from homology"/>
<name>RS5_LACDB</name>
<dbReference type="EMBL" id="CP000412">
    <property type="protein sequence ID" value="ABJ58024.1"/>
    <property type="molecule type" value="Genomic_DNA"/>
</dbReference>
<dbReference type="RefSeq" id="WP_003620849.1">
    <property type="nucleotide sequence ID" value="NC_008529.1"/>
</dbReference>
<dbReference type="SMR" id="Q04BZ8"/>
<dbReference type="KEGG" id="lbu:LBUL_0367"/>
<dbReference type="HOGENOM" id="CLU_065898_2_2_9"/>
<dbReference type="BioCyc" id="LDEL321956:LBUL_RS01715-MONOMER"/>
<dbReference type="GO" id="GO:0015935">
    <property type="term" value="C:small ribosomal subunit"/>
    <property type="evidence" value="ECO:0007669"/>
    <property type="project" value="InterPro"/>
</dbReference>
<dbReference type="GO" id="GO:0019843">
    <property type="term" value="F:rRNA binding"/>
    <property type="evidence" value="ECO:0007669"/>
    <property type="project" value="UniProtKB-UniRule"/>
</dbReference>
<dbReference type="GO" id="GO:0003735">
    <property type="term" value="F:structural constituent of ribosome"/>
    <property type="evidence" value="ECO:0007669"/>
    <property type="project" value="InterPro"/>
</dbReference>
<dbReference type="GO" id="GO:0006412">
    <property type="term" value="P:translation"/>
    <property type="evidence" value="ECO:0007669"/>
    <property type="project" value="UniProtKB-UniRule"/>
</dbReference>
<dbReference type="FunFam" id="3.30.160.20:FF:000001">
    <property type="entry name" value="30S ribosomal protein S5"/>
    <property type="match status" value="1"/>
</dbReference>
<dbReference type="FunFam" id="3.30.230.10:FF:000002">
    <property type="entry name" value="30S ribosomal protein S5"/>
    <property type="match status" value="1"/>
</dbReference>
<dbReference type="Gene3D" id="3.30.160.20">
    <property type="match status" value="1"/>
</dbReference>
<dbReference type="Gene3D" id="3.30.230.10">
    <property type="match status" value="1"/>
</dbReference>
<dbReference type="HAMAP" id="MF_01307_B">
    <property type="entry name" value="Ribosomal_uS5_B"/>
    <property type="match status" value="1"/>
</dbReference>
<dbReference type="InterPro" id="IPR020568">
    <property type="entry name" value="Ribosomal_Su5_D2-typ_SF"/>
</dbReference>
<dbReference type="InterPro" id="IPR000851">
    <property type="entry name" value="Ribosomal_uS5"/>
</dbReference>
<dbReference type="InterPro" id="IPR005712">
    <property type="entry name" value="Ribosomal_uS5_bac-type"/>
</dbReference>
<dbReference type="InterPro" id="IPR005324">
    <property type="entry name" value="Ribosomal_uS5_C"/>
</dbReference>
<dbReference type="InterPro" id="IPR013810">
    <property type="entry name" value="Ribosomal_uS5_N"/>
</dbReference>
<dbReference type="InterPro" id="IPR018192">
    <property type="entry name" value="Ribosomal_uS5_N_CS"/>
</dbReference>
<dbReference type="InterPro" id="IPR014721">
    <property type="entry name" value="Ribsml_uS5_D2-typ_fold_subgr"/>
</dbReference>
<dbReference type="NCBIfam" id="TIGR01021">
    <property type="entry name" value="rpsE_bact"/>
    <property type="match status" value="1"/>
</dbReference>
<dbReference type="PANTHER" id="PTHR48277">
    <property type="entry name" value="MITOCHONDRIAL RIBOSOMAL PROTEIN S5"/>
    <property type="match status" value="1"/>
</dbReference>
<dbReference type="PANTHER" id="PTHR48277:SF1">
    <property type="entry name" value="MITOCHONDRIAL RIBOSOMAL PROTEIN S5"/>
    <property type="match status" value="1"/>
</dbReference>
<dbReference type="Pfam" id="PF00333">
    <property type="entry name" value="Ribosomal_S5"/>
    <property type="match status" value="1"/>
</dbReference>
<dbReference type="Pfam" id="PF03719">
    <property type="entry name" value="Ribosomal_S5_C"/>
    <property type="match status" value="1"/>
</dbReference>
<dbReference type="SUPFAM" id="SSF54768">
    <property type="entry name" value="dsRNA-binding domain-like"/>
    <property type="match status" value="1"/>
</dbReference>
<dbReference type="SUPFAM" id="SSF54211">
    <property type="entry name" value="Ribosomal protein S5 domain 2-like"/>
    <property type="match status" value="1"/>
</dbReference>
<dbReference type="PROSITE" id="PS00585">
    <property type="entry name" value="RIBOSOMAL_S5"/>
    <property type="match status" value="1"/>
</dbReference>
<dbReference type="PROSITE" id="PS50881">
    <property type="entry name" value="S5_DSRBD"/>
    <property type="match status" value="1"/>
</dbReference>
<evidence type="ECO:0000255" key="1">
    <source>
        <dbReference type="HAMAP-Rule" id="MF_01307"/>
    </source>
</evidence>
<evidence type="ECO:0000305" key="2"/>
<organism>
    <name type="scientific">Lactobacillus delbrueckii subsp. bulgaricus (strain ATCC BAA-365 / Lb-18)</name>
    <dbReference type="NCBI Taxonomy" id="321956"/>
    <lineage>
        <taxon>Bacteria</taxon>
        <taxon>Bacillati</taxon>
        <taxon>Bacillota</taxon>
        <taxon>Bacilli</taxon>
        <taxon>Lactobacillales</taxon>
        <taxon>Lactobacillaceae</taxon>
        <taxon>Lactobacillus</taxon>
    </lineage>
</organism>
<comment type="function">
    <text evidence="1">With S4 and S12 plays an important role in translational accuracy.</text>
</comment>
<comment type="function">
    <text evidence="1">Located at the back of the 30S subunit body where it stabilizes the conformation of the head with respect to the body.</text>
</comment>
<comment type="subunit">
    <text evidence="1">Part of the 30S ribosomal subunit. Contacts proteins S4 and S8.</text>
</comment>
<comment type="domain">
    <text>The N-terminal domain interacts with the head of the 30S subunit; the C-terminal domain interacts with the body and contacts protein S4. The interaction surface between S4 and S5 is involved in control of translational fidelity.</text>
</comment>
<comment type="similarity">
    <text evidence="1">Belongs to the universal ribosomal protein uS5 family.</text>
</comment>
<accession>Q04BZ8</accession>
<gene>
    <name evidence="1" type="primary">rpsE</name>
    <name type="ordered locus">LBUL_0367</name>
</gene>
<sequence>MANRNDSKNRRNKDDIEDQLVAINRITKVVKGGRRQRFAALVVVGDKKGHVGFGTGKATEVPEAIRKAVEAGKKNMISVPTVGTTIPHEVLGHYGSGNVLLKPAEAGSGIAAGGAVRIVMDMAGIGDVTSKSLGSNTPINVIRATIDGLQKLKTREDVLKLRESAKSLQD</sequence>
<feature type="chain" id="PRO_0000323141" description="Small ribosomal subunit protein uS5">
    <location>
        <begin position="1"/>
        <end position="170"/>
    </location>
</feature>
<feature type="domain" description="S5 DRBM" evidence="1">
    <location>
        <begin position="16"/>
        <end position="79"/>
    </location>
</feature>
<keyword id="KW-0687">Ribonucleoprotein</keyword>
<keyword id="KW-0689">Ribosomal protein</keyword>
<keyword id="KW-0694">RNA-binding</keyword>
<keyword id="KW-0699">rRNA-binding</keyword>
<reference key="1">
    <citation type="journal article" date="2006" name="Proc. Natl. Acad. Sci. U.S.A.">
        <title>Comparative genomics of the lactic acid bacteria.</title>
        <authorList>
            <person name="Makarova K.S."/>
            <person name="Slesarev A."/>
            <person name="Wolf Y.I."/>
            <person name="Sorokin A."/>
            <person name="Mirkin B."/>
            <person name="Koonin E.V."/>
            <person name="Pavlov A."/>
            <person name="Pavlova N."/>
            <person name="Karamychev V."/>
            <person name="Polouchine N."/>
            <person name="Shakhova V."/>
            <person name="Grigoriev I."/>
            <person name="Lou Y."/>
            <person name="Rohksar D."/>
            <person name="Lucas S."/>
            <person name="Huang K."/>
            <person name="Goodstein D.M."/>
            <person name="Hawkins T."/>
            <person name="Plengvidhya V."/>
            <person name="Welker D."/>
            <person name="Hughes J."/>
            <person name="Goh Y."/>
            <person name="Benson A."/>
            <person name="Baldwin K."/>
            <person name="Lee J.-H."/>
            <person name="Diaz-Muniz I."/>
            <person name="Dosti B."/>
            <person name="Smeianov V."/>
            <person name="Wechter W."/>
            <person name="Barabote R."/>
            <person name="Lorca G."/>
            <person name="Altermann E."/>
            <person name="Barrangou R."/>
            <person name="Ganesan B."/>
            <person name="Xie Y."/>
            <person name="Rawsthorne H."/>
            <person name="Tamir D."/>
            <person name="Parker C."/>
            <person name="Breidt F."/>
            <person name="Broadbent J.R."/>
            <person name="Hutkins R."/>
            <person name="O'Sullivan D."/>
            <person name="Steele J."/>
            <person name="Unlu G."/>
            <person name="Saier M.H. Jr."/>
            <person name="Klaenhammer T."/>
            <person name="Richardson P."/>
            <person name="Kozyavkin S."/>
            <person name="Weimer B.C."/>
            <person name="Mills D.A."/>
        </authorList>
    </citation>
    <scope>NUCLEOTIDE SEQUENCE [LARGE SCALE GENOMIC DNA]</scope>
    <source>
        <strain>ATCC BAA-365 / Lb-18</strain>
    </source>
</reference>
<protein>
    <recommendedName>
        <fullName evidence="1">Small ribosomal subunit protein uS5</fullName>
    </recommendedName>
    <alternativeName>
        <fullName evidence="2">30S ribosomal protein S5</fullName>
    </alternativeName>
</protein>